<feature type="chain" id="PRO_0000426770" description="Uncharacterized ABC transporter ATP-binding protein MT2640">
    <location>
        <begin position="1"/>
        <end position="330"/>
    </location>
</feature>
<feature type="domain" description="ABC transporter" evidence="1">
    <location>
        <begin position="4"/>
        <end position="242"/>
    </location>
</feature>
<feature type="binding site" evidence="1">
    <location>
        <begin position="40"/>
        <end position="47"/>
    </location>
    <ligand>
        <name>ATP</name>
        <dbReference type="ChEBI" id="CHEBI:30616"/>
    </ligand>
</feature>
<feature type="binding site">
    <location>
        <begin position="210"/>
        <end position="330"/>
    </location>
    <ligand>
        <name>a nucleoside 3',5'-cyclic phosphate</name>
        <dbReference type="ChEBI" id="CHEBI:58464"/>
    </ligand>
</feature>
<reference key="1">
    <citation type="journal article" date="2002" name="J. Bacteriol.">
        <title>Whole-genome comparison of Mycobacterium tuberculosis clinical and laboratory strains.</title>
        <authorList>
            <person name="Fleischmann R.D."/>
            <person name="Alland D."/>
            <person name="Eisen J.A."/>
            <person name="Carpenter L."/>
            <person name="White O."/>
            <person name="Peterson J.D."/>
            <person name="DeBoy R.T."/>
            <person name="Dodson R.J."/>
            <person name="Gwinn M.L."/>
            <person name="Haft D.H."/>
            <person name="Hickey E.K."/>
            <person name="Kolonay J.F."/>
            <person name="Nelson W.C."/>
            <person name="Umayam L.A."/>
            <person name="Ermolaeva M.D."/>
            <person name="Salzberg S.L."/>
            <person name="Delcher A."/>
            <person name="Utterback T.R."/>
            <person name="Weidman J.F."/>
            <person name="Khouri H.M."/>
            <person name="Gill J."/>
            <person name="Mikula A."/>
            <person name="Bishai W."/>
            <person name="Jacobs W.R. Jr."/>
            <person name="Venter J.C."/>
            <person name="Fraser C.M."/>
        </authorList>
    </citation>
    <scope>NUCLEOTIDE SEQUENCE [LARGE SCALE GENOMIC DNA]</scope>
    <source>
        <strain>CDC 1551 / Oshkosh</strain>
    </source>
</reference>
<keyword id="KW-0067">ATP-binding</keyword>
<keyword id="KW-0547">Nucleotide-binding</keyword>
<keyword id="KW-1185">Reference proteome</keyword>
<keyword id="KW-0813">Transport</keyword>
<organism>
    <name type="scientific">Mycobacterium tuberculosis (strain CDC 1551 / Oshkosh)</name>
    <dbReference type="NCBI Taxonomy" id="83331"/>
    <lineage>
        <taxon>Bacteria</taxon>
        <taxon>Bacillati</taxon>
        <taxon>Actinomycetota</taxon>
        <taxon>Actinomycetes</taxon>
        <taxon>Mycobacteriales</taxon>
        <taxon>Mycobacteriaceae</taxon>
        <taxon>Mycobacterium</taxon>
        <taxon>Mycobacterium tuberculosis complex</taxon>
    </lineage>
</organism>
<protein>
    <recommendedName>
        <fullName>Uncharacterized ABC transporter ATP-binding protein MT2640</fullName>
    </recommendedName>
</protein>
<dbReference type="EMBL" id="AE000516">
    <property type="protein sequence ID" value="AAK46953.1"/>
    <property type="molecule type" value="Genomic_DNA"/>
</dbReference>
<dbReference type="PIR" id="H70728">
    <property type="entry name" value="H70728"/>
</dbReference>
<dbReference type="RefSeq" id="WP_003899378.1">
    <property type="nucleotide sequence ID" value="NZ_KK341227.1"/>
</dbReference>
<dbReference type="SMR" id="P9WQI4"/>
<dbReference type="KEGG" id="mtc:MT2640"/>
<dbReference type="PATRIC" id="fig|83331.31.peg.2847"/>
<dbReference type="HOGENOM" id="CLU_000604_1_6_11"/>
<dbReference type="Proteomes" id="UP000001020">
    <property type="component" value="Chromosome"/>
</dbReference>
<dbReference type="GO" id="GO:0005886">
    <property type="term" value="C:plasma membrane"/>
    <property type="evidence" value="ECO:0007669"/>
    <property type="project" value="TreeGrafter"/>
</dbReference>
<dbReference type="GO" id="GO:0005524">
    <property type="term" value="F:ATP binding"/>
    <property type="evidence" value="ECO:0007669"/>
    <property type="project" value="UniProtKB-KW"/>
</dbReference>
<dbReference type="GO" id="GO:0016887">
    <property type="term" value="F:ATP hydrolysis activity"/>
    <property type="evidence" value="ECO:0007669"/>
    <property type="project" value="InterPro"/>
</dbReference>
<dbReference type="GO" id="GO:0022857">
    <property type="term" value="F:transmembrane transporter activity"/>
    <property type="evidence" value="ECO:0007669"/>
    <property type="project" value="TreeGrafter"/>
</dbReference>
<dbReference type="CDD" id="cd03255">
    <property type="entry name" value="ABC_MJ0796_LolCDE_FtsE"/>
    <property type="match status" value="1"/>
</dbReference>
<dbReference type="CDD" id="cd00038">
    <property type="entry name" value="CAP_ED"/>
    <property type="match status" value="1"/>
</dbReference>
<dbReference type="FunFam" id="3.40.50.300:FF:001448">
    <property type="entry name" value="Glutamine ABC transporter ATP-binding protein"/>
    <property type="match status" value="1"/>
</dbReference>
<dbReference type="FunFam" id="2.60.120.10:FF:000127">
    <property type="entry name" value="Glutamine-transport ATP-binding protein ABC transporter GLNQ"/>
    <property type="match status" value="1"/>
</dbReference>
<dbReference type="Gene3D" id="2.60.120.10">
    <property type="entry name" value="Jelly Rolls"/>
    <property type="match status" value="1"/>
</dbReference>
<dbReference type="Gene3D" id="3.40.50.300">
    <property type="entry name" value="P-loop containing nucleotide triphosphate hydrolases"/>
    <property type="match status" value="1"/>
</dbReference>
<dbReference type="InterPro" id="IPR003593">
    <property type="entry name" value="AAA+_ATPase"/>
</dbReference>
<dbReference type="InterPro" id="IPR003439">
    <property type="entry name" value="ABC_transporter-like_ATP-bd"/>
</dbReference>
<dbReference type="InterPro" id="IPR017871">
    <property type="entry name" value="ABC_transporter-like_CS"/>
</dbReference>
<dbReference type="InterPro" id="IPR015854">
    <property type="entry name" value="ABC_transpr_LolD-like"/>
</dbReference>
<dbReference type="InterPro" id="IPR018488">
    <property type="entry name" value="cNMP-bd_CS"/>
</dbReference>
<dbReference type="InterPro" id="IPR000595">
    <property type="entry name" value="cNMP-bd_dom"/>
</dbReference>
<dbReference type="InterPro" id="IPR018490">
    <property type="entry name" value="cNMP-bd_dom_sf"/>
</dbReference>
<dbReference type="InterPro" id="IPR017911">
    <property type="entry name" value="MacB-like_ATP-bd"/>
</dbReference>
<dbReference type="InterPro" id="IPR027417">
    <property type="entry name" value="P-loop_NTPase"/>
</dbReference>
<dbReference type="InterPro" id="IPR014710">
    <property type="entry name" value="RmlC-like_jellyroll"/>
</dbReference>
<dbReference type="PANTHER" id="PTHR24220">
    <property type="entry name" value="IMPORT ATP-BINDING PROTEIN"/>
    <property type="match status" value="1"/>
</dbReference>
<dbReference type="PANTHER" id="PTHR24220:SF689">
    <property type="entry name" value="LIPOPROTEIN-RELEASING SYSTEM ATP-BINDING PROTEIN LOLD"/>
    <property type="match status" value="1"/>
</dbReference>
<dbReference type="Pfam" id="PF00005">
    <property type="entry name" value="ABC_tran"/>
    <property type="match status" value="1"/>
</dbReference>
<dbReference type="Pfam" id="PF00027">
    <property type="entry name" value="cNMP_binding"/>
    <property type="match status" value="1"/>
</dbReference>
<dbReference type="PRINTS" id="PR00103">
    <property type="entry name" value="CAMPKINASE"/>
</dbReference>
<dbReference type="SMART" id="SM00382">
    <property type="entry name" value="AAA"/>
    <property type="match status" value="1"/>
</dbReference>
<dbReference type="SMART" id="SM00100">
    <property type="entry name" value="cNMP"/>
    <property type="match status" value="1"/>
</dbReference>
<dbReference type="SUPFAM" id="SSF51206">
    <property type="entry name" value="cAMP-binding domain-like"/>
    <property type="match status" value="1"/>
</dbReference>
<dbReference type="SUPFAM" id="SSF52540">
    <property type="entry name" value="P-loop containing nucleoside triphosphate hydrolases"/>
    <property type="match status" value="1"/>
</dbReference>
<dbReference type="PROSITE" id="PS00211">
    <property type="entry name" value="ABC_TRANSPORTER_1"/>
    <property type="match status" value="1"/>
</dbReference>
<dbReference type="PROSITE" id="PS50893">
    <property type="entry name" value="ABC_TRANSPORTER_2"/>
    <property type="match status" value="1"/>
</dbReference>
<dbReference type="PROSITE" id="PS00889">
    <property type="entry name" value="CNMP_BINDING_2"/>
    <property type="match status" value="1"/>
</dbReference>
<dbReference type="PROSITE" id="PS50042">
    <property type="entry name" value="CNMP_BINDING_3"/>
    <property type="match status" value="1"/>
</dbReference>
<proteinExistence type="inferred from homology"/>
<comment type="similarity">
    <text evidence="2">Belongs to the ABC transporter superfamily.</text>
</comment>
<name>Y2564_MYCTO</name>
<accession>P9WQI4</accession>
<accession>L0TA01</accession>
<accession>P63401</accession>
<accession>Q50734</accession>
<sequence>MGGLTISDLVVEYSSGGYAVRPIDGLSLDVAPGSLVILLGPSGCGKTTLLSCLGGILRPKSGSIKFDDVDITTLEGAALAKYRRDKVGIVFQAFNLVSSLTALENVMVPLRAAGVSRAAARKRAEDLLIRVNLGERMKHRPGDMSGGQQQRVAVARAIALDPQLILADEPTAHLDFIQVEEVLRLIRSLAQGDRVVVVATHDSRMLPLADRVLELMPAQVSPNQPPETVHVKAGEVLFEQSTMGDLIYVVSEGEFEIVRELADGGEELVKTAAPGDYFGEIGVLFHLPRSATVRARSDATAVGYTAQAFRERLGVTRVADLIEHRELASE</sequence>
<evidence type="ECO:0000255" key="1">
    <source>
        <dbReference type="PROSITE-ProRule" id="PRU00434"/>
    </source>
</evidence>
<evidence type="ECO:0000305" key="2"/>
<gene>
    <name type="ordered locus">MT2640</name>
</gene>